<comment type="function">
    <text evidence="1">Component of the acetyl coenzyme A carboxylase (ACC) complex. Biotin carboxylase (BC) catalyzes the carboxylation of biotin on its carrier protein (BCCP) and then the CO(2) group is transferred by the transcarboxylase to acetyl-CoA to form malonyl-CoA.</text>
</comment>
<comment type="catalytic activity">
    <reaction evidence="1">
        <text>N(6)-carboxybiotinyl-L-lysyl-[protein] + acetyl-CoA = N(6)-biotinyl-L-lysyl-[protein] + malonyl-CoA</text>
        <dbReference type="Rhea" id="RHEA:54728"/>
        <dbReference type="Rhea" id="RHEA-COMP:10505"/>
        <dbReference type="Rhea" id="RHEA-COMP:10506"/>
        <dbReference type="ChEBI" id="CHEBI:57288"/>
        <dbReference type="ChEBI" id="CHEBI:57384"/>
        <dbReference type="ChEBI" id="CHEBI:83144"/>
        <dbReference type="ChEBI" id="CHEBI:83145"/>
        <dbReference type="EC" id="2.1.3.15"/>
    </reaction>
</comment>
<comment type="cofactor">
    <cofactor evidence="1">
        <name>Zn(2+)</name>
        <dbReference type="ChEBI" id="CHEBI:29105"/>
    </cofactor>
    <text evidence="1">Binds 1 zinc ion per subunit.</text>
</comment>
<comment type="pathway">
    <text evidence="1">Lipid metabolism; malonyl-CoA biosynthesis; malonyl-CoA from acetyl-CoA: step 1/1.</text>
</comment>
<comment type="subunit">
    <text evidence="1">Acetyl-CoA carboxylase is a heterohexamer composed of biotin carboxyl carrier protein (AccB), biotin carboxylase (AccC) and two subunits each of ACCase subunit alpha (AccA) and ACCase subunit beta (AccD).</text>
</comment>
<comment type="subcellular location">
    <subcellularLocation>
        <location evidence="1">Cytoplasm</location>
    </subcellularLocation>
</comment>
<comment type="similarity">
    <text evidence="1">Belongs to the AccD/PCCB family.</text>
</comment>
<feature type="chain" id="PRO_0000389714" description="Acetyl-coenzyme A carboxylase carboxyl transferase subunit beta">
    <location>
        <begin position="1"/>
        <end position="279"/>
    </location>
</feature>
<feature type="domain" description="CoA carboxyltransferase N-terminal" evidence="2">
    <location>
        <begin position="23"/>
        <end position="279"/>
    </location>
</feature>
<feature type="zinc finger region" description="C4-type" evidence="1">
    <location>
        <begin position="27"/>
        <end position="49"/>
    </location>
</feature>
<feature type="binding site" evidence="1">
    <location>
        <position position="27"/>
    </location>
    <ligand>
        <name>Zn(2+)</name>
        <dbReference type="ChEBI" id="CHEBI:29105"/>
    </ligand>
</feature>
<feature type="binding site" evidence="1">
    <location>
        <position position="30"/>
    </location>
    <ligand>
        <name>Zn(2+)</name>
        <dbReference type="ChEBI" id="CHEBI:29105"/>
    </ligand>
</feature>
<feature type="binding site" evidence="1">
    <location>
        <position position="46"/>
    </location>
    <ligand>
        <name>Zn(2+)</name>
        <dbReference type="ChEBI" id="CHEBI:29105"/>
    </ligand>
</feature>
<feature type="binding site" evidence="1">
    <location>
        <position position="49"/>
    </location>
    <ligand>
        <name>Zn(2+)</name>
        <dbReference type="ChEBI" id="CHEBI:29105"/>
    </ligand>
</feature>
<keyword id="KW-0067">ATP-binding</keyword>
<keyword id="KW-0963">Cytoplasm</keyword>
<keyword id="KW-0275">Fatty acid biosynthesis</keyword>
<keyword id="KW-0276">Fatty acid metabolism</keyword>
<keyword id="KW-0444">Lipid biosynthesis</keyword>
<keyword id="KW-0443">Lipid metabolism</keyword>
<keyword id="KW-0479">Metal-binding</keyword>
<keyword id="KW-0547">Nucleotide-binding</keyword>
<keyword id="KW-0808">Transferase</keyword>
<keyword id="KW-0862">Zinc</keyword>
<keyword id="KW-0863">Zinc-finger</keyword>
<proteinExistence type="inferred from homology"/>
<reference key="1">
    <citation type="submission" date="2005-08" db="EMBL/GenBank/DDBJ databases">
        <title>Complete sequence of Chlorobium chlorochromatii CaD3.</title>
        <authorList>
            <consortium name="US DOE Joint Genome Institute"/>
            <person name="Copeland A."/>
            <person name="Lucas S."/>
            <person name="Lapidus A."/>
            <person name="Barry K."/>
            <person name="Detter J.C."/>
            <person name="Glavina T."/>
            <person name="Hammon N."/>
            <person name="Israni S."/>
            <person name="Pitluck S."/>
            <person name="Bryant D."/>
            <person name="Schmutz J."/>
            <person name="Larimer F."/>
            <person name="Land M."/>
            <person name="Kyrpides N."/>
            <person name="Ivanova N."/>
            <person name="Richardson P."/>
        </authorList>
    </citation>
    <scope>NUCLEOTIDE SEQUENCE [LARGE SCALE GENOMIC DNA]</scope>
    <source>
        <strain>CaD3</strain>
    </source>
</reference>
<organism>
    <name type="scientific">Chlorobium chlorochromatii (strain CaD3)</name>
    <dbReference type="NCBI Taxonomy" id="340177"/>
    <lineage>
        <taxon>Bacteria</taxon>
        <taxon>Pseudomonadati</taxon>
        <taxon>Chlorobiota</taxon>
        <taxon>Chlorobiia</taxon>
        <taxon>Chlorobiales</taxon>
        <taxon>Chlorobiaceae</taxon>
        <taxon>Chlorobium/Pelodictyon group</taxon>
        <taxon>Chlorobium</taxon>
    </lineage>
</organism>
<gene>
    <name evidence="1" type="primary">accD</name>
    <name type="ordered locus">Cag_0289</name>
</gene>
<protein>
    <recommendedName>
        <fullName evidence="1">Acetyl-coenzyme A carboxylase carboxyl transferase subunit beta</fullName>
        <shortName evidence="1">ACCase subunit beta</shortName>
        <shortName evidence="1">Acetyl-CoA carboxylase carboxyltransferase subunit beta</shortName>
        <ecNumber evidence="1">2.1.3.15</ecNumber>
    </recommendedName>
</protein>
<dbReference type="EC" id="2.1.3.15" evidence="1"/>
<dbReference type="EMBL" id="CP000108">
    <property type="protein sequence ID" value="ABB27565.1"/>
    <property type="molecule type" value="Genomic_DNA"/>
</dbReference>
<dbReference type="SMR" id="Q3ATW0"/>
<dbReference type="STRING" id="340177.Cag_0289"/>
<dbReference type="KEGG" id="cch:Cag_0289"/>
<dbReference type="eggNOG" id="COG0777">
    <property type="taxonomic scope" value="Bacteria"/>
</dbReference>
<dbReference type="HOGENOM" id="CLU_015486_1_0_10"/>
<dbReference type="OrthoDB" id="9772975at2"/>
<dbReference type="UniPathway" id="UPA00655">
    <property type="reaction ID" value="UER00711"/>
</dbReference>
<dbReference type="GO" id="GO:0009317">
    <property type="term" value="C:acetyl-CoA carboxylase complex"/>
    <property type="evidence" value="ECO:0007669"/>
    <property type="project" value="InterPro"/>
</dbReference>
<dbReference type="GO" id="GO:0003989">
    <property type="term" value="F:acetyl-CoA carboxylase activity"/>
    <property type="evidence" value="ECO:0007669"/>
    <property type="project" value="InterPro"/>
</dbReference>
<dbReference type="GO" id="GO:0005524">
    <property type="term" value="F:ATP binding"/>
    <property type="evidence" value="ECO:0007669"/>
    <property type="project" value="UniProtKB-KW"/>
</dbReference>
<dbReference type="GO" id="GO:0016743">
    <property type="term" value="F:carboxyl- or carbamoyltransferase activity"/>
    <property type="evidence" value="ECO:0007669"/>
    <property type="project" value="UniProtKB-UniRule"/>
</dbReference>
<dbReference type="GO" id="GO:0008270">
    <property type="term" value="F:zinc ion binding"/>
    <property type="evidence" value="ECO:0007669"/>
    <property type="project" value="UniProtKB-UniRule"/>
</dbReference>
<dbReference type="GO" id="GO:0006633">
    <property type="term" value="P:fatty acid biosynthetic process"/>
    <property type="evidence" value="ECO:0007669"/>
    <property type="project" value="UniProtKB-KW"/>
</dbReference>
<dbReference type="GO" id="GO:2001295">
    <property type="term" value="P:malonyl-CoA biosynthetic process"/>
    <property type="evidence" value="ECO:0007669"/>
    <property type="project" value="UniProtKB-UniRule"/>
</dbReference>
<dbReference type="Gene3D" id="3.90.226.10">
    <property type="entry name" value="2-enoyl-CoA Hydratase, Chain A, domain 1"/>
    <property type="match status" value="1"/>
</dbReference>
<dbReference type="HAMAP" id="MF_01395">
    <property type="entry name" value="AcetylCoA_CT_beta"/>
    <property type="match status" value="1"/>
</dbReference>
<dbReference type="InterPro" id="IPR034733">
    <property type="entry name" value="AcCoA_carboxyl_beta"/>
</dbReference>
<dbReference type="InterPro" id="IPR000438">
    <property type="entry name" value="Acetyl_CoA_COase_Trfase_b_su"/>
</dbReference>
<dbReference type="InterPro" id="IPR029045">
    <property type="entry name" value="ClpP/crotonase-like_dom_sf"/>
</dbReference>
<dbReference type="InterPro" id="IPR011762">
    <property type="entry name" value="COA_CT_N"/>
</dbReference>
<dbReference type="InterPro" id="IPR041010">
    <property type="entry name" value="Znf-ACC"/>
</dbReference>
<dbReference type="NCBIfam" id="TIGR00515">
    <property type="entry name" value="accD"/>
    <property type="match status" value="1"/>
</dbReference>
<dbReference type="PANTHER" id="PTHR42995">
    <property type="entry name" value="ACETYL-COENZYME A CARBOXYLASE CARBOXYL TRANSFERASE SUBUNIT BETA, CHLOROPLASTIC"/>
    <property type="match status" value="1"/>
</dbReference>
<dbReference type="PANTHER" id="PTHR42995:SF5">
    <property type="entry name" value="ACETYL-COENZYME A CARBOXYLASE CARBOXYL TRANSFERASE SUBUNIT BETA, CHLOROPLASTIC"/>
    <property type="match status" value="1"/>
</dbReference>
<dbReference type="Pfam" id="PF01039">
    <property type="entry name" value="Carboxyl_trans"/>
    <property type="match status" value="1"/>
</dbReference>
<dbReference type="Pfam" id="PF17848">
    <property type="entry name" value="Zn_ribbon_ACC"/>
    <property type="match status" value="1"/>
</dbReference>
<dbReference type="PRINTS" id="PR01070">
    <property type="entry name" value="ACCCTRFRASEB"/>
</dbReference>
<dbReference type="SUPFAM" id="SSF52096">
    <property type="entry name" value="ClpP/crotonase"/>
    <property type="match status" value="1"/>
</dbReference>
<dbReference type="PROSITE" id="PS50980">
    <property type="entry name" value="COA_CT_NTER"/>
    <property type="match status" value="1"/>
</dbReference>
<evidence type="ECO:0000255" key="1">
    <source>
        <dbReference type="HAMAP-Rule" id="MF_01395"/>
    </source>
</evidence>
<evidence type="ECO:0000255" key="2">
    <source>
        <dbReference type="PROSITE-ProRule" id="PRU01136"/>
    </source>
</evidence>
<sequence>MSWFNRVKPSISSTAKRDVPEGLWWKCEECGAALHKKQMEASDHTCPQCGYHFRISPYKYFSLLFDNQKYVEFDDHLRAADPLHFVDTKKYPDRVSDTIEKSGKTEACRNAHGLCGGETLVISAMDFSFIGGSMGSVVGEKISRAVDKAIELQSPLLVISQSGGARMMEGAFSLMQMAKTAAKLSLLSEHRLPYISLMTDPTMGGITASFAMLGDINISEPKALIGFAGPRVIRDTIKRDLPEGFQRAEFLLEHGFIDRIIPRRELKSDLTTLLSLMKL</sequence>
<name>ACCD_CHLCH</name>
<accession>Q3ATW0</accession>